<feature type="chain" id="PRO_1000122844" description="Protein TusC">
    <location>
        <begin position="1"/>
        <end position="118"/>
    </location>
</feature>
<proteinExistence type="inferred from homology"/>
<name>TUSC_SALA4</name>
<gene>
    <name evidence="1" type="primary">tusC</name>
    <name type="ordered locus">SeAg_B3647</name>
</gene>
<comment type="function">
    <text evidence="1">Part of a sulfur-relay system required for 2-thiolation of 5-methylaminomethyl-2-thiouridine (mnm(5)s(2)U) at tRNA wobble positions.</text>
</comment>
<comment type="subunit">
    <text evidence="1">Heterohexamer, formed by a dimer of trimers. The hexameric TusBCD complex contains 2 copies each of TusB, TusC and TusD. The TusBCD complex interacts with TusE.</text>
</comment>
<comment type="subcellular location">
    <subcellularLocation>
        <location evidence="1">Cytoplasm</location>
    </subcellularLocation>
</comment>
<comment type="similarity">
    <text evidence="1">Belongs to the DsrF/TusC family.</text>
</comment>
<organism>
    <name type="scientific">Salmonella agona (strain SL483)</name>
    <dbReference type="NCBI Taxonomy" id="454166"/>
    <lineage>
        <taxon>Bacteria</taxon>
        <taxon>Pseudomonadati</taxon>
        <taxon>Pseudomonadota</taxon>
        <taxon>Gammaproteobacteria</taxon>
        <taxon>Enterobacterales</taxon>
        <taxon>Enterobacteriaceae</taxon>
        <taxon>Salmonella</taxon>
    </lineage>
</organism>
<sequence>MKRIAFVFSTAPHGSASGREGLDALLATSALTEALGVFFISDGVFQLLPGQKPDAVLARDYIATFKLFDLYDIDQCWICAASLRERGLENVNFVVDATPLEPVALRRELGNYDVILRF</sequence>
<evidence type="ECO:0000255" key="1">
    <source>
        <dbReference type="HAMAP-Rule" id="MF_00389"/>
    </source>
</evidence>
<keyword id="KW-0963">Cytoplasm</keyword>
<keyword id="KW-0819">tRNA processing</keyword>
<accession>B5F8G2</accession>
<protein>
    <recommendedName>
        <fullName evidence="1">Protein TusC</fullName>
    </recommendedName>
    <alternativeName>
        <fullName evidence="1">tRNA 2-thiouridine synthesizing protein C</fullName>
    </alternativeName>
</protein>
<reference key="1">
    <citation type="journal article" date="2011" name="J. Bacteriol.">
        <title>Comparative genomics of 28 Salmonella enterica isolates: evidence for CRISPR-mediated adaptive sublineage evolution.</title>
        <authorList>
            <person name="Fricke W.F."/>
            <person name="Mammel M.K."/>
            <person name="McDermott P.F."/>
            <person name="Tartera C."/>
            <person name="White D.G."/>
            <person name="Leclerc J.E."/>
            <person name="Ravel J."/>
            <person name="Cebula T.A."/>
        </authorList>
    </citation>
    <scope>NUCLEOTIDE SEQUENCE [LARGE SCALE GENOMIC DNA]</scope>
    <source>
        <strain>SL483</strain>
    </source>
</reference>
<dbReference type="EMBL" id="CP001138">
    <property type="protein sequence ID" value="ACH52108.1"/>
    <property type="molecule type" value="Genomic_DNA"/>
</dbReference>
<dbReference type="RefSeq" id="WP_000820705.1">
    <property type="nucleotide sequence ID" value="NC_011149.1"/>
</dbReference>
<dbReference type="SMR" id="B5F8G2"/>
<dbReference type="GeneID" id="66757785"/>
<dbReference type="KEGG" id="sea:SeAg_B3647"/>
<dbReference type="HOGENOM" id="CLU_155943_1_0_6"/>
<dbReference type="Proteomes" id="UP000008819">
    <property type="component" value="Chromosome"/>
</dbReference>
<dbReference type="GO" id="GO:0005737">
    <property type="term" value="C:cytoplasm"/>
    <property type="evidence" value="ECO:0007669"/>
    <property type="project" value="UniProtKB-SubCell"/>
</dbReference>
<dbReference type="GO" id="GO:0008033">
    <property type="term" value="P:tRNA processing"/>
    <property type="evidence" value="ECO:0007669"/>
    <property type="project" value="UniProtKB-UniRule"/>
</dbReference>
<dbReference type="Gene3D" id="3.40.1260.10">
    <property type="entry name" value="DsrEFH-like"/>
    <property type="match status" value="1"/>
</dbReference>
<dbReference type="HAMAP" id="MF_00389">
    <property type="entry name" value="Thiourid_synth_C"/>
    <property type="match status" value="1"/>
</dbReference>
<dbReference type="InterPro" id="IPR027396">
    <property type="entry name" value="DsrEFH-like"/>
</dbReference>
<dbReference type="InterPro" id="IPR003787">
    <property type="entry name" value="Sulphur_relay_DsrE/F-like"/>
</dbReference>
<dbReference type="InterPro" id="IPR037450">
    <property type="entry name" value="Sulphur_relay_TusC"/>
</dbReference>
<dbReference type="InterPro" id="IPR017462">
    <property type="entry name" value="Sulphur_relay_TusC/DsrF"/>
</dbReference>
<dbReference type="NCBIfam" id="NF001238">
    <property type="entry name" value="PRK00211.1"/>
    <property type="match status" value="1"/>
</dbReference>
<dbReference type="NCBIfam" id="TIGR03010">
    <property type="entry name" value="sulf_tusC_dsrF"/>
    <property type="match status" value="1"/>
</dbReference>
<dbReference type="PANTHER" id="PTHR38780">
    <property type="entry name" value="PROTEIN TUSC"/>
    <property type="match status" value="1"/>
</dbReference>
<dbReference type="PANTHER" id="PTHR38780:SF1">
    <property type="entry name" value="PROTEIN TUSC"/>
    <property type="match status" value="1"/>
</dbReference>
<dbReference type="Pfam" id="PF02635">
    <property type="entry name" value="DsrE"/>
    <property type="match status" value="1"/>
</dbReference>
<dbReference type="SUPFAM" id="SSF75169">
    <property type="entry name" value="DsrEFH-like"/>
    <property type="match status" value="1"/>
</dbReference>